<dbReference type="EMBL" id="BC079467">
    <property type="protein sequence ID" value="AAH79467.1"/>
    <property type="molecule type" value="mRNA"/>
</dbReference>
<dbReference type="EMBL" id="BC103642">
    <property type="protein sequence ID" value="AAI03643.1"/>
    <property type="molecule type" value="mRNA"/>
</dbReference>
<dbReference type="RefSeq" id="NP_001028233.2">
    <property type="nucleotide sequence ID" value="NM_001033061.2"/>
</dbReference>
<dbReference type="RefSeq" id="NP_001231690.1">
    <property type="nucleotide sequence ID" value="NM_001244761.1"/>
</dbReference>
<dbReference type="SMR" id="Q3ZAU7"/>
<dbReference type="FunCoup" id="Q3ZAU7">
    <property type="interactions" value="2143"/>
</dbReference>
<dbReference type="STRING" id="10116.ENSRNOP00000056033"/>
<dbReference type="iPTMnet" id="Q3ZAU7"/>
<dbReference type="PhosphoSitePlus" id="Q3ZAU7"/>
<dbReference type="PaxDb" id="10116-ENSRNOP00000056033"/>
<dbReference type="GeneID" id="289150"/>
<dbReference type="KEGG" id="rno:289150"/>
<dbReference type="UCSC" id="RGD:1311868">
    <property type="organism name" value="rat"/>
</dbReference>
<dbReference type="AGR" id="RGD:1311868"/>
<dbReference type="CTD" id="91687"/>
<dbReference type="RGD" id="1311868">
    <property type="gene designation" value="Cenpl"/>
</dbReference>
<dbReference type="VEuPathDB" id="HostDB:ENSRNOG00000038789"/>
<dbReference type="eggNOG" id="ENOG502QS38">
    <property type="taxonomic scope" value="Eukaryota"/>
</dbReference>
<dbReference type="HOGENOM" id="CLU_070598_0_0_1"/>
<dbReference type="InParanoid" id="Q3ZAU7"/>
<dbReference type="PhylomeDB" id="Q3ZAU7"/>
<dbReference type="TreeFam" id="TF329688"/>
<dbReference type="Reactome" id="R-RNO-141444">
    <property type="pathway name" value="Amplification of signal from unattached kinetochores via a MAD2 inhibitory signal"/>
</dbReference>
<dbReference type="Reactome" id="R-RNO-2467813">
    <property type="pathway name" value="Separation of Sister Chromatids"/>
</dbReference>
<dbReference type="Reactome" id="R-RNO-2500257">
    <property type="pathway name" value="Resolution of Sister Chromatid Cohesion"/>
</dbReference>
<dbReference type="Reactome" id="R-RNO-5663220">
    <property type="pathway name" value="RHO GTPases Activate Formins"/>
</dbReference>
<dbReference type="Reactome" id="R-RNO-606279">
    <property type="pathway name" value="Deposition of new CENPA-containing nucleosomes at the centromere"/>
</dbReference>
<dbReference type="Reactome" id="R-RNO-68877">
    <property type="pathway name" value="Mitotic Prometaphase"/>
</dbReference>
<dbReference type="Reactome" id="R-RNO-9648025">
    <property type="pathway name" value="EML4 and NUDC in mitotic spindle formation"/>
</dbReference>
<dbReference type="PRO" id="PR:Q3ZAU7"/>
<dbReference type="Proteomes" id="UP000002494">
    <property type="component" value="Chromosome 13"/>
</dbReference>
<dbReference type="Bgee" id="ENSRNOG00000038789">
    <property type="expression patterns" value="Expressed in thymus and 19 other cell types or tissues"/>
</dbReference>
<dbReference type="ExpressionAtlas" id="Q3ZAU7">
    <property type="expression patterns" value="baseline and differential"/>
</dbReference>
<dbReference type="GO" id="GO:0000939">
    <property type="term" value="C:inner kinetochore"/>
    <property type="evidence" value="ECO:0000266"/>
    <property type="project" value="RGD"/>
</dbReference>
<dbReference type="GO" id="GO:0005634">
    <property type="term" value="C:nucleus"/>
    <property type="evidence" value="ECO:0007669"/>
    <property type="project" value="UniProtKB-SubCell"/>
</dbReference>
<dbReference type="InterPro" id="IPR025204">
    <property type="entry name" value="CENP-L"/>
</dbReference>
<dbReference type="PANTHER" id="PTHR31740">
    <property type="entry name" value="CENTROMERE PROTEIN L"/>
    <property type="match status" value="1"/>
</dbReference>
<dbReference type="PANTHER" id="PTHR31740:SF2">
    <property type="entry name" value="CENTROMERE PROTEIN L"/>
    <property type="match status" value="1"/>
</dbReference>
<dbReference type="Pfam" id="PF13092">
    <property type="entry name" value="CENP-L"/>
    <property type="match status" value="1"/>
</dbReference>
<organism>
    <name type="scientific">Rattus norvegicus</name>
    <name type="common">Rat</name>
    <dbReference type="NCBI Taxonomy" id="10116"/>
    <lineage>
        <taxon>Eukaryota</taxon>
        <taxon>Metazoa</taxon>
        <taxon>Chordata</taxon>
        <taxon>Craniata</taxon>
        <taxon>Vertebrata</taxon>
        <taxon>Euteleostomi</taxon>
        <taxon>Mammalia</taxon>
        <taxon>Eutheria</taxon>
        <taxon>Euarchontoglires</taxon>
        <taxon>Glires</taxon>
        <taxon>Rodentia</taxon>
        <taxon>Myomorpha</taxon>
        <taxon>Muroidea</taxon>
        <taxon>Muridae</taxon>
        <taxon>Murinae</taxon>
        <taxon>Rattus</taxon>
    </lineage>
</organism>
<evidence type="ECO:0000250" key="1"/>
<evidence type="ECO:0000250" key="2">
    <source>
        <dbReference type="UniProtKB" id="Q8N0S6"/>
    </source>
</evidence>
<evidence type="ECO:0000305" key="3"/>
<comment type="function">
    <text evidence="1">Component of the CENPA-CAD (nucleosome distal) complex, a complex recruited to centromeres which is involved in assembly of kinetochore proteins, mitotic progression and chromosome segregation. May be involved in incorporation of newly synthesized CENPA into centromeres via its interaction with the CENPA-NAC complex (By similarity).</text>
</comment>
<comment type="subunit">
    <text evidence="1">Component of the CENPA-CAD complex, composed of CENPI, CENPK, CENPL, CENPO, CENPP, CENPQ, CENPR and CENPS. The CENPA-CAD complex interacts with the CENPA-NAC complex, at least composed of CENPA, CENPC, CENPH, CENPM, CENPN, CENPT and CENPU (By similarity).</text>
</comment>
<comment type="subcellular location">
    <subcellularLocation>
        <location evidence="1">Nucleus</location>
    </subcellularLocation>
    <subcellularLocation>
        <location evidence="1">Chromosome</location>
        <location evidence="1">Centromere</location>
    </subcellularLocation>
    <text evidence="1">Localizes exclusively in the centromeres. The CENPA-CAD complex is probably recruited on centromeres by the CENPA-NAC complex (By similarity).</text>
</comment>
<comment type="similarity">
    <text evidence="3">Belongs to the CENP-L/IML3 family.</text>
</comment>
<feature type="chain" id="PRO_0000247172" description="Centromere protein L">
    <location>
        <begin position="1"/>
        <end position="345"/>
    </location>
</feature>
<feature type="modified residue" description="Phosphoserine" evidence="2">
    <location>
        <position position="40"/>
    </location>
</feature>
<feature type="modified residue" description="Phosphoserine" evidence="2">
    <location>
        <position position="54"/>
    </location>
</feature>
<protein>
    <recommendedName>
        <fullName>Centromere protein L</fullName>
        <shortName>CENP-L</shortName>
    </recommendedName>
</protein>
<proteinExistence type="evidence at transcript level"/>
<keyword id="KW-0137">Centromere</keyword>
<keyword id="KW-0158">Chromosome</keyword>
<keyword id="KW-0539">Nucleus</keyword>
<keyword id="KW-0597">Phosphoprotein</keyword>
<keyword id="KW-1185">Reference proteome</keyword>
<gene>
    <name type="primary">Cenpl</name>
</gene>
<sequence>MDTYDSQGPTSRRRTSNLKDYFVSATPLQKRLKLARRQSSVFPSPSRRKIPQCSQLQEDIDPQKVAFLLHKQWTVYSLTPLYKFSYSNLKDYSRLLSAFIAAEKQKGLAVEVGEDFNIKVIFSTLLGVKGTQRDPEAFLVQIRSESQSSREHRQDKVLWTGWFCCVFGENLQETVSEDFTCLPLFLAHGAESNTSLIGGWFQKTFDCCFSPLAISAFNLSWMAAMWTACKMDHYMATTEFFWSVPCSPQSLDISYAIHPEDAKALWDSVHKTPGEVTQEEVDLFMNCLYSHFHRHFRIHLSATRLVRVSTSVASAHTDGKIKILCHKYLIGVLAYMTELAIFQIE</sequence>
<reference key="1">
    <citation type="journal article" date="2004" name="Genome Res.">
        <title>The status, quality, and expansion of the NIH full-length cDNA project: the Mammalian Gene Collection (MGC).</title>
        <authorList>
            <consortium name="The MGC Project Team"/>
        </authorList>
    </citation>
    <scope>NUCLEOTIDE SEQUENCE [LARGE SCALE MRNA]</scope>
    <source>
        <tissue>Lung</tissue>
        <tissue>Ovary</tissue>
    </source>
</reference>
<accession>Q3ZAU7</accession>
<accession>Q0P5Q6</accession>
<name>CENPL_RAT</name>